<comment type="similarity">
    <text evidence="2">Belongs to the DNA polymerase type-Y family.</text>
</comment>
<feature type="chain" id="PRO_0000173985" description="Uncharacterized protein MG360 homolog">
    <location>
        <begin position="1"/>
        <end position="412"/>
    </location>
</feature>
<feature type="domain" description="UmuC" evidence="1">
    <location>
        <begin position="20"/>
        <end position="199"/>
    </location>
</feature>
<reference key="1">
    <citation type="journal article" date="1996" name="Nucleic Acids Res.">
        <title>Complete sequence analysis of the genome of the bacterium Mycoplasma pneumoniae.</title>
        <authorList>
            <person name="Himmelreich R."/>
            <person name="Hilbert H."/>
            <person name="Plagens H."/>
            <person name="Pirkl E."/>
            <person name="Li B.-C."/>
            <person name="Herrmann R."/>
        </authorList>
    </citation>
    <scope>NUCLEOTIDE SEQUENCE [LARGE SCALE GENOMIC DNA]</scope>
    <source>
        <strain>ATCC 29342 / M129 / Subtype 1</strain>
    </source>
</reference>
<sequence>MIGTFTYLDPTIQADPNLLFFYFDFDAFFASVEEIENPELKNQPLIVGNRTSRSVVSTCNYLARSYGIKSGMPIAKALELCPQAIFATSHFRNYRKYSAKIFAMIAEQFNLEVHTLSIDEGFVCFRDLSPRKAFSLAKRIQRHVYEQLNFHISIGISNQFTLAKIFSNQAKPFGVKSCFSKEVKRKLWPLPIVELPGIGKRQLDNAFKNNFHKIGDLAKCKDVTLFKRVFGIAWESLHAVALGETYTQSEQDVKSRSIAVSETLEYLNYSSNQLQQKLTSIFNELYARLQLSFQMCKGVVVQLKSNDFIVNSHSQSIKKYTADYQTLLVIVKKLFNRLLMGVGLNIRLIGVSFFGLKNNPSSSRPEGLLFYEYQQAKPKQQTAHFALDQMIYEINQSFGYEIIQRAKKLAAS</sequence>
<keyword id="KW-1185">Reference proteome</keyword>
<name>Y537_MYCPN</name>
<evidence type="ECO:0000255" key="1">
    <source>
        <dbReference type="PROSITE-ProRule" id="PRU00216"/>
    </source>
</evidence>
<evidence type="ECO:0000305" key="2"/>
<proteinExistence type="inferred from homology"/>
<accession>P75241</accession>
<gene>
    <name type="ordered locus">MPN_537</name>
    <name type="ORF">G12_orf412</name>
    <name type="ORF">MP305</name>
</gene>
<protein>
    <recommendedName>
        <fullName>Uncharacterized protein MG360 homolog</fullName>
    </recommendedName>
</protein>
<dbReference type="EMBL" id="U00089">
    <property type="protein sequence ID" value="AAB95953.1"/>
    <property type="molecule type" value="Genomic_DNA"/>
</dbReference>
<dbReference type="PIR" id="S73631">
    <property type="entry name" value="S73631"/>
</dbReference>
<dbReference type="RefSeq" id="NP_110226.1">
    <property type="nucleotide sequence ID" value="NC_000912.1"/>
</dbReference>
<dbReference type="RefSeq" id="WP_010874894.1">
    <property type="nucleotide sequence ID" value="NC_000912.1"/>
</dbReference>
<dbReference type="SMR" id="P75241"/>
<dbReference type="IntAct" id="P75241">
    <property type="interactions" value="1"/>
</dbReference>
<dbReference type="STRING" id="272634.MPN_537"/>
<dbReference type="EnsemblBacteria" id="AAB95953">
    <property type="protein sequence ID" value="AAB95953"/>
    <property type="gene ID" value="MPN_537"/>
</dbReference>
<dbReference type="KEGG" id="mpn:MPN_537"/>
<dbReference type="PATRIC" id="fig|272634.6.peg.599"/>
<dbReference type="HOGENOM" id="CLU_012348_1_1_14"/>
<dbReference type="OrthoDB" id="9808813at2"/>
<dbReference type="BioCyc" id="MPNE272634:G1GJ3-886-MONOMER"/>
<dbReference type="Proteomes" id="UP000000808">
    <property type="component" value="Chromosome"/>
</dbReference>
<dbReference type="GO" id="GO:0005829">
    <property type="term" value="C:cytosol"/>
    <property type="evidence" value="ECO:0007669"/>
    <property type="project" value="TreeGrafter"/>
</dbReference>
<dbReference type="GO" id="GO:0003684">
    <property type="term" value="F:damaged DNA binding"/>
    <property type="evidence" value="ECO:0007669"/>
    <property type="project" value="InterPro"/>
</dbReference>
<dbReference type="GO" id="GO:0003887">
    <property type="term" value="F:DNA-directed DNA polymerase activity"/>
    <property type="evidence" value="ECO:0007669"/>
    <property type="project" value="InterPro"/>
</dbReference>
<dbReference type="GO" id="GO:0042276">
    <property type="term" value="P:error-prone translesion synthesis"/>
    <property type="evidence" value="ECO:0007669"/>
    <property type="project" value="TreeGrafter"/>
</dbReference>
<dbReference type="GO" id="GO:0009432">
    <property type="term" value="P:SOS response"/>
    <property type="evidence" value="ECO:0007669"/>
    <property type="project" value="TreeGrafter"/>
</dbReference>
<dbReference type="CDD" id="cd03586">
    <property type="entry name" value="PolY_Pol_IV_kappa"/>
    <property type="match status" value="1"/>
</dbReference>
<dbReference type="Gene3D" id="3.30.70.270">
    <property type="match status" value="1"/>
</dbReference>
<dbReference type="Gene3D" id="3.40.1170.60">
    <property type="match status" value="1"/>
</dbReference>
<dbReference type="Gene3D" id="3.30.1490.100">
    <property type="entry name" value="DNA polymerase, Y-family, little finger domain"/>
    <property type="match status" value="1"/>
</dbReference>
<dbReference type="InterPro" id="IPR043502">
    <property type="entry name" value="DNA/RNA_pol_sf"/>
</dbReference>
<dbReference type="InterPro" id="IPR036775">
    <property type="entry name" value="DNA_pol_Y-fam_lit_finger_sf"/>
</dbReference>
<dbReference type="InterPro" id="IPR017961">
    <property type="entry name" value="DNA_pol_Y-fam_little_finger"/>
</dbReference>
<dbReference type="InterPro" id="IPR050116">
    <property type="entry name" value="DNA_polymerase-Y"/>
</dbReference>
<dbReference type="InterPro" id="IPR022880">
    <property type="entry name" value="DNApol_IV"/>
</dbReference>
<dbReference type="InterPro" id="IPR043128">
    <property type="entry name" value="Rev_trsase/Diguanyl_cyclase"/>
</dbReference>
<dbReference type="InterPro" id="IPR001126">
    <property type="entry name" value="UmuC"/>
</dbReference>
<dbReference type="PANTHER" id="PTHR11076:SF33">
    <property type="entry name" value="DNA POLYMERASE KAPPA"/>
    <property type="match status" value="1"/>
</dbReference>
<dbReference type="PANTHER" id="PTHR11076">
    <property type="entry name" value="DNA REPAIR POLYMERASE UMUC / TRANSFERASE FAMILY MEMBER"/>
    <property type="match status" value="1"/>
</dbReference>
<dbReference type="Pfam" id="PF00817">
    <property type="entry name" value="IMS"/>
    <property type="match status" value="1"/>
</dbReference>
<dbReference type="Pfam" id="PF11799">
    <property type="entry name" value="IMS_C"/>
    <property type="match status" value="1"/>
</dbReference>
<dbReference type="SUPFAM" id="SSF56672">
    <property type="entry name" value="DNA/RNA polymerases"/>
    <property type="match status" value="1"/>
</dbReference>
<dbReference type="SUPFAM" id="SSF100879">
    <property type="entry name" value="Lesion bypass DNA polymerase (Y-family), little finger domain"/>
    <property type="match status" value="1"/>
</dbReference>
<dbReference type="PROSITE" id="PS50173">
    <property type="entry name" value="UMUC"/>
    <property type="match status" value="1"/>
</dbReference>
<organism>
    <name type="scientific">Mycoplasma pneumoniae (strain ATCC 29342 / M129 / Subtype 1)</name>
    <name type="common">Mycoplasmoides pneumoniae</name>
    <dbReference type="NCBI Taxonomy" id="272634"/>
    <lineage>
        <taxon>Bacteria</taxon>
        <taxon>Bacillati</taxon>
        <taxon>Mycoplasmatota</taxon>
        <taxon>Mycoplasmoidales</taxon>
        <taxon>Mycoplasmoidaceae</taxon>
        <taxon>Mycoplasmoides</taxon>
    </lineage>
</organism>